<protein>
    <recommendedName>
        <fullName evidence="1">Ribonuclease Y</fullName>
        <shortName evidence="1">RNase Y</shortName>
        <ecNumber evidence="1">3.1.-.-</ecNumber>
    </recommendedName>
</protein>
<gene>
    <name evidence="1" type="primary">rny</name>
    <name type="ordered locus">SSU98_0408</name>
</gene>
<dbReference type="EC" id="3.1.-.-" evidence="1"/>
<dbReference type="EMBL" id="CP000408">
    <property type="protein sequence ID" value="ABP91566.1"/>
    <property type="molecule type" value="Genomic_DNA"/>
</dbReference>
<dbReference type="SMR" id="A4VZM7"/>
<dbReference type="KEGG" id="ssv:SSU98_0408"/>
<dbReference type="HOGENOM" id="CLU_028328_1_0_9"/>
<dbReference type="GO" id="GO:0005886">
    <property type="term" value="C:plasma membrane"/>
    <property type="evidence" value="ECO:0007669"/>
    <property type="project" value="UniProtKB-SubCell"/>
</dbReference>
<dbReference type="GO" id="GO:0003723">
    <property type="term" value="F:RNA binding"/>
    <property type="evidence" value="ECO:0007669"/>
    <property type="project" value="UniProtKB-UniRule"/>
</dbReference>
<dbReference type="GO" id="GO:0004521">
    <property type="term" value="F:RNA endonuclease activity"/>
    <property type="evidence" value="ECO:0007669"/>
    <property type="project" value="UniProtKB-UniRule"/>
</dbReference>
<dbReference type="GO" id="GO:0006402">
    <property type="term" value="P:mRNA catabolic process"/>
    <property type="evidence" value="ECO:0007669"/>
    <property type="project" value="UniProtKB-UniRule"/>
</dbReference>
<dbReference type="CDD" id="cd00077">
    <property type="entry name" value="HDc"/>
    <property type="match status" value="1"/>
</dbReference>
<dbReference type="CDD" id="cd22431">
    <property type="entry name" value="KH-I_RNaseY"/>
    <property type="match status" value="1"/>
</dbReference>
<dbReference type="FunFam" id="1.10.3210.10:FF:000003">
    <property type="entry name" value="Ribonuclease Y"/>
    <property type="match status" value="1"/>
</dbReference>
<dbReference type="Gene3D" id="1.10.3210.10">
    <property type="entry name" value="Hypothetical protein af1432"/>
    <property type="match status" value="1"/>
</dbReference>
<dbReference type="Gene3D" id="3.30.1370.10">
    <property type="entry name" value="K Homology domain, type 1"/>
    <property type="match status" value="1"/>
</dbReference>
<dbReference type="HAMAP" id="MF_00335">
    <property type="entry name" value="RNase_Y"/>
    <property type="match status" value="1"/>
</dbReference>
<dbReference type="InterPro" id="IPR003607">
    <property type="entry name" value="HD/PDEase_dom"/>
</dbReference>
<dbReference type="InterPro" id="IPR006674">
    <property type="entry name" value="HD_domain"/>
</dbReference>
<dbReference type="InterPro" id="IPR006675">
    <property type="entry name" value="HDIG_dom"/>
</dbReference>
<dbReference type="InterPro" id="IPR004087">
    <property type="entry name" value="KH_dom"/>
</dbReference>
<dbReference type="InterPro" id="IPR004088">
    <property type="entry name" value="KH_dom_type_1"/>
</dbReference>
<dbReference type="InterPro" id="IPR036612">
    <property type="entry name" value="KH_dom_type_1_sf"/>
</dbReference>
<dbReference type="InterPro" id="IPR017705">
    <property type="entry name" value="Ribonuclease_Y"/>
</dbReference>
<dbReference type="InterPro" id="IPR022711">
    <property type="entry name" value="RNase_Y_N"/>
</dbReference>
<dbReference type="NCBIfam" id="TIGR00277">
    <property type="entry name" value="HDIG"/>
    <property type="match status" value="1"/>
</dbReference>
<dbReference type="NCBIfam" id="NF000997">
    <property type="entry name" value="PRK00106.1"/>
    <property type="match status" value="1"/>
</dbReference>
<dbReference type="NCBIfam" id="TIGR03319">
    <property type="entry name" value="RNase_Y"/>
    <property type="match status" value="1"/>
</dbReference>
<dbReference type="PANTHER" id="PTHR12826">
    <property type="entry name" value="RIBONUCLEASE Y"/>
    <property type="match status" value="1"/>
</dbReference>
<dbReference type="PANTHER" id="PTHR12826:SF15">
    <property type="entry name" value="RIBONUCLEASE Y"/>
    <property type="match status" value="1"/>
</dbReference>
<dbReference type="Pfam" id="PF01966">
    <property type="entry name" value="HD"/>
    <property type="match status" value="1"/>
</dbReference>
<dbReference type="Pfam" id="PF00013">
    <property type="entry name" value="KH_1"/>
    <property type="match status" value="1"/>
</dbReference>
<dbReference type="Pfam" id="PF12072">
    <property type="entry name" value="RNase_Y_N"/>
    <property type="match status" value="1"/>
</dbReference>
<dbReference type="SMART" id="SM00471">
    <property type="entry name" value="HDc"/>
    <property type="match status" value="1"/>
</dbReference>
<dbReference type="SMART" id="SM00322">
    <property type="entry name" value="KH"/>
    <property type="match status" value="1"/>
</dbReference>
<dbReference type="SUPFAM" id="SSF54791">
    <property type="entry name" value="Eukaryotic type KH-domain (KH-domain type I)"/>
    <property type="match status" value="1"/>
</dbReference>
<dbReference type="SUPFAM" id="SSF109604">
    <property type="entry name" value="HD-domain/PDEase-like"/>
    <property type="match status" value="1"/>
</dbReference>
<dbReference type="PROSITE" id="PS51831">
    <property type="entry name" value="HD"/>
    <property type="match status" value="1"/>
</dbReference>
<dbReference type="PROSITE" id="PS50084">
    <property type="entry name" value="KH_TYPE_1"/>
    <property type="match status" value="1"/>
</dbReference>
<name>RNY_STRS2</name>
<reference key="1">
    <citation type="journal article" date="2007" name="PLoS ONE">
        <title>A glimpse of streptococcal toxic shock syndrome from comparative genomics of S. suis 2 Chinese isolates.</title>
        <authorList>
            <person name="Chen C."/>
            <person name="Tang J."/>
            <person name="Dong W."/>
            <person name="Wang C."/>
            <person name="Feng Y."/>
            <person name="Wang J."/>
            <person name="Zheng F."/>
            <person name="Pan X."/>
            <person name="Liu D."/>
            <person name="Li M."/>
            <person name="Song Y."/>
            <person name="Zhu X."/>
            <person name="Sun H."/>
            <person name="Feng T."/>
            <person name="Guo Z."/>
            <person name="Ju A."/>
            <person name="Ge J."/>
            <person name="Dong Y."/>
            <person name="Sun W."/>
            <person name="Jiang Y."/>
            <person name="Wang J."/>
            <person name="Yan J."/>
            <person name="Yang H."/>
            <person name="Wang X."/>
            <person name="Gao G.F."/>
            <person name="Yang R."/>
            <person name="Wang J."/>
            <person name="Yu J."/>
        </authorList>
    </citation>
    <scope>NUCLEOTIDE SEQUENCE [LARGE SCALE GENOMIC DNA]</scope>
    <source>
        <strain>98HAH33</strain>
    </source>
</reference>
<evidence type="ECO:0000255" key="1">
    <source>
        <dbReference type="HAMAP-Rule" id="MF_00335"/>
    </source>
</evidence>
<evidence type="ECO:0000255" key="2">
    <source>
        <dbReference type="PROSITE-ProRule" id="PRU01175"/>
    </source>
</evidence>
<evidence type="ECO:0000256" key="3">
    <source>
        <dbReference type="SAM" id="MobiDB-lite"/>
    </source>
</evidence>
<proteinExistence type="inferred from homology"/>
<feature type="chain" id="PRO_0000344951" description="Ribonuclease Y">
    <location>
        <begin position="1"/>
        <end position="537"/>
    </location>
</feature>
<feature type="transmembrane region" description="Helical" evidence="1">
    <location>
        <begin position="3"/>
        <end position="23"/>
    </location>
</feature>
<feature type="domain" description="KH" evidence="1">
    <location>
        <begin position="227"/>
        <end position="287"/>
    </location>
</feature>
<feature type="domain" description="HD" evidence="2">
    <location>
        <begin position="353"/>
        <end position="446"/>
    </location>
</feature>
<feature type="region of interest" description="Disordered" evidence="3">
    <location>
        <begin position="112"/>
        <end position="136"/>
    </location>
</feature>
<organism>
    <name type="scientific">Streptococcus suis (strain 98HAH33)</name>
    <dbReference type="NCBI Taxonomy" id="391296"/>
    <lineage>
        <taxon>Bacteria</taxon>
        <taxon>Bacillati</taxon>
        <taxon>Bacillota</taxon>
        <taxon>Bacilli</taxon>
        <taxon>Lactobacillales</taxon>
        <taxon>Streptococcaceae</taxon>
        <taxon>Streptococcus</taxon>
    </lineage>
</organism>
<sequence length="537" mass="60539">MNIITVVVTLVSALIGLVLGYFAISLKMKSAKETAELTLLNAEQEASNVRGRAEEQAEVILKTAERDRQTLKKELLLEAKEEARKYREEIAEEFKSERQELKQIESRLTERATSLDRKDDNLTNKEKTLEQKEQSLTDKAKHIDEREQEVVKLEEQKALELERVAALSQEEAKEIILTDTRDKLTHEIATRIKEAEREVKERSDKMAKDLLAQAMQRISGEYVAEQTITSVHLPDDAMKGRIIGREGRNIRTFESLTGIDVIIDDTPEVVVLSGFDPIRREIARMTMETLLQDGRIHPARIEELVEKHRVEMDNRIREYGEAAAYEVGAPNLHPDLIKIMGRLHFRTSYGQNVLRHSIEVAKLAGVLAAELGENVNLARRAGFLHDVGKAIDREVDGSHVEIGTELAKKYKENPIVINAIASHHGDVEATSTIAVIVAAADALSAARPGSRRESMEAYIKRLQDLEEIANSFEGIKQSYAIQAGREIRIIVHPNKVTDDQITILAHDVREKIENNLDYPGNIKITVIRETRATDVAK</sequence>
<comment type="function">
    <text evidence="1">Endoribonuclease that initiates mRNA decay.</text>
</comment>
<comment type="subcellular location">
    <subcellularLocation>
        <location evidence="1">Cell membrane</location>
        <topology evidence="1">Single-pass membrane protein</topology>
    </subcellularLocation>
</comment>
<comment type="similarity">
    <text evidence="1">Belongs to the RNase Y family.</text>
</comment>
<accession>A4VZM7</accession>
<keyword id="KW-1003">Cell membrane</keyword>
<keyword id="KW-0255">Endonuclease</keyword>
<keyword id="KW-0378">Hydrolase</keyword>
<keyword id="KW-0472">Membrane</keyword>
<keyword id="KW-0540">Nuclease</keyword>
<keyword id="KW-0694">RNA-binding</keyword>
<keyword id="KW-0812">Transmembrane</keyword>
<keyword id="KW-1133">Transmembrane helix</keyword>